<accession>B7KFR8</accession>
<keyword id="KW-1185">Reference proteome</keyword>
<keyword id="KW-0694">RNA-binding</keyword>
<keyword id="KW-0804">Transcription</keyword>
<keyword id="KW-0889">Transcription antitermination</keyword>
<keyword id="KW-0805">Transcription regulation</keyword>
<reference key="1">
    <citation type="journal article" date="2011" name="MBio">
        <title>Novel metabolic attributes of the genus Cyanothece, comprising a group of unicellular nitrogen-fixing Cyanobacteria.</title>
        <authorList>
            <person name="Bandyopadhyay A."/>
            <person name="Elvitigala T."/>
            <person name="Welsh E."/>
            <person name="Stockel J."/>
            <person name="Liberton M."/>
            <person name="Min H."/>
            <person name="Sherman L.A."/>
            <person name="Pakrasi H.B."/>
        </authorList>
    </citation>
    <scope>NUCLEOTIDE SEQUENCE [LARGE SCALE GENOMIC DNA]</scope>
    <source>
        <strain>PCC 7424</strain>
    </source>
</reference>
<proteinExistence type="inferred from homology"/>
<feature type="chain" id="PRO_1000192430" description="Transcription antitermination protein NusB">
    <location>
        <begin position="1"/>
        <end position="212"/>
    </location>
</feature>
<gene>
    <name evidence="1" type="primary">nusB</name>
    <name type="ordered locus">PCC7424_5041</name>
</gene>
<name>NUSB_GLOC7</name>
<sequence length="212" mass="24253">MSPRQQPRRIARELALLSLSQIKGSSDKLEQVELNNLVIAAIRTLSGEVQESLETAAAEVSRSQERLLASETRATNLKSAQTMVTEALELTQNAINRLAAMVEIPEMVQLSSQYEVREYALEIIQTVYRRQTEIEQELATVMVDWQLNRLPKIDRDILRIAVAEMIFLEVPQKVAINEAVEIAKRYSDEEGYRFINGVLRRVTERLKTEARR</sequence>
<evidence type="ECO:0000255" key="1">
    <source>
        <dbReference type="HAMAP-Rule" id="MF_00073"/>
    </source>
</evidence>
<organism>
    <name type="scientific">Gloeothece citriformis (strain PCC 7424)</name>
    <name type="common">Cyanothece sp. (strain PCC 7424)</name>
    <dbReference type="NCBI Taxonomy" id="65393"/>
    <lineage>
        <taxon>Bacteria</taxon>
        <taxon>Bacillati</taxon>
        <taxon>Cyanobacteriota</taxon>
        <taxon>Cyanophyceae</taxon>
        <taxon>Oscillatoriophycideae</taxon>
        <taxon>Chroococcales</taxon>
        <taxon>Aphanothecaceae</taxon>
        <taxon>Gloeothece</taxon>
        <taxon>Gloeothece citriformis</taxon>
    </lineage>
</organism>
<protein>
    <recommendedName>
        <fullName evidence="1">Transcription antitermination protein NusB</fullName>
    </recommendedName>
    <alternativeName>
        <fullName evidence="1">Antitermination factor NusB</fullName>
    </alternativeName>
</protein>
<dbReference type="EMBL" id="CP001291">
    <property type="protein sequence ID" value="ACK73393.1"/>
    <property type="molecule type" value="Genomic_DNA"/>
</dbReference>
<dbReference type="RefSeq" id="WP_015956973.1">
    <property type="nucleotide sequence ID" value="NC_011729.1"/>
</dbReference>
<dbReference type="SMR" id="B7KFR8"/>
<dbReference type="STRING" id="65393.PCC7424_5041"/>
<dbReference type="KEGG" id="cyc:PCC7424_5041"/>
<dbReference type="eggNOG" id="COG0781">
    <property type="taxonomic scope" value="Bacteria"/>
</dbReference>
<dbReference type="HOGENOM" id="CLU_087843_0_0_3"/>
<dbReference type="OrthoDB" id="3528057at2"/>
<dbReference type="Proteomes" id="UP000002384">
    <property type="component" value="Chromosome"/>
</dbReference>
<dbReference type="GO" id="GO:0005829">
    <property type="term" value="C:cytosol"/>
    <property type="evidence" value="ECO:0007669"/>
    <property type="project" value="TreeGrafter"/>
</dbReference>
<dbReference type="GO" id="GO:0003723">
    <property type="term" value="F:RNA binding"/>
    <property type="evidence" value="ECO:0007669"/>
    <property type="project" value="UniProtKB-UniRule"/>
</dbReference>
<dbReference type="GO" id="GO:0006353">
    <property type="term" value="P:DNA-templated transcription termination"/>
    <property type="evidence" value="ECO:0007669"/>
    <property type="project" value="UniProtKB-UniRule"/>
</dbReference>
<dbReference type="GO" id="GO:0031564">
    <property type="term" value="P:transcription antitermination"/>
    <property type="evidence" value="ECO:0007669"/>
    <property type="project" value="UniProtKB-KW"/>
</dbReference>
<dbReference type="Gene3D" id="1.10.940.10">
    <property type="entry name" value="NusB-like"/>
    <property type="match status" value="1"/>
</dbReference>
<dbReference type="HAMAP" id="MF_00073">
    <property type="entry name" value="NusB"/>
    <property type="match status" value="1"/>
</dbReference>
<dbReference type="InterPro" id="IPR035926">
    <property type="entry name" value="NusB-like_sf"/>
</dbReference>
<dbReference type="InterPro" id="IPR011605">
    <property type="entry name" value="NusB_fam"/>
</dbReference>
<dbReference type="InterPro" id="IPR006027">
    <property type="entry name" value="NusB_RsmB_TIM44"/>
</dbReference>
<dbReference type="NCBIfam" id="TIGR01951">
    <property type="entry name" value="nusB"/>
    <property type="match status" value="1"/>
</dbReference>
<dbReference type="PANTHER" id="PTHR11078:SF3">
    <property type="entry name" value="ANTITERMINATION NUSB DOMAIN-CONTAINING PROTEIN"/>
    <property type="match status" value="1"/>
</dbReference>
<dbReference type="PANTHER" id="PTHR11078">
    <property type="entry name" value="N UTILIZATION SUBSTANCE PROTEIN B-RELATED"/>
    <property type="match status" value="1"/>
</dbReference>
<dbReference type="Pfam" id="PF01029">
    <property type="entry name" value="NusB"/>
    <property type="match status" value="1"/>
</dbReference>
<dbReference type="SUPFAM" id="SSF48013">
    <property type="entry name" value="NusB-like"/>
    <property type="match status" value="1"/>
</dbReference>
<comment type="function">
    <text evidence="1">Involved in transcription antitermination. Required for transcription of ribosomal RNA (rRNA) genes. Binds specifically to the boxA antiterminator sequence of the ribosomal RNA (rrn) operons.</text>
</comment>
<comment type="similarity">
    <text evidence="1">Belongs to the NusB family.</text>
</comment>